<accession>P44561</accession>
<accession>O30882</accession>
<evidence type="ECO:0000250" key="1"/>
<evidence type="ECO:0000305" key="2"/>
<gene>
    <name type="primary">fur</name>
    <name type="ordered locus">HI_0190</name>
</gene>
<reference key="1">
    <citation type="journal article" date="1995" name="Science">
        <title>Whole-genome random sequencing and assembly of Haemophilus influenzae Rd.</title>
        <authorList>
            <person name="Fleischmann R.D."/>
            <person name="Adams M.D."/>
            <person name="White O."/>
            <person name="Clayton R.A."/>
            <person name="Kirkness E.F."/>
            <person name="Kerlavage A.R."/>
            <person name="Bult C.J."/>
            <person name="Tomb J.-F."/>
            <person name="Dougherty B.A."/>
            <person name="Merrick J.M."/>
            <person name="McKenney K."/>
            <person name="Sutton G.G."/>
            <person name="FitzHugh W."/>
            <person name="Fields C.A."/>
            <person name="Gocayne J.D."/>
            <person name="Scott J.D."/>
            <person name="Shirley R."/>
            <person name="Liu L.-I."/>
            <person name="Glodek A."/>
            <person name="Kelley J.M."/>
            <person name="Weidman J.F."/>
            <person name="Phillips C.A."/>
            <person name="Spriggs T."/>
            <person name="Hedblom E."/>
            <person name="Cotton M.D."/>
            <person name="Utterback T.R."/>
            <person name="Hanna M.C."/>
            <person name="Nguyen D.T."/>
            <person name="Saudek D.M."/>
            <person name="Brandon R.C."/>
            <person name="Fine L.D."/>
            <person name="Fritchman J.L."/>
            <person name="Fuhrmann J.L."/>
            <person name="Geoghagen N.S.M."/>
            <person name="Gnehm C.L."/>
            <person name="McDonald L.A."/>
            <person name="Small K.V."/>
            <person name="Fraser C.M."/>
            <person name="Smith H.O."/>
            <person name="Venter J.C."/>
        </authorList>
    </citation>
    <scope>NUCLEOTIDE SEQUENCE [LARGE SCALE GENOMIC DNA]</scope>
    <source>
        <strain>ATCC 51907 / DSM 11121 / KW20 / Rd</strain>
    </source>
</reference>
<reference key="2">
    <citation type="journal article" date="1998" name="Front. Biosci.">
        <title>Molecular and genetic analysis of iron uptake proteins in the Brazilian purpuric fever clone of Haemophilus influenzae biogroup aegyptius.</title>
        <authorList>
            <person name="Smoot L.M."/>
            <person name="Bell E.C."/>
            <person name="Paz R.L."/>
            <person name="Corbin K.A."/>
            <person name="Hall D.D."/>
            <person name="Steenbergen J.N."/>
            <person name="Harner A.C."/>
            <person name="Actis L.A."/>
        </authorList>
    </citation>
    <scope>NUCLEOTIDE SEQUENCE [GENOMIC DNA]</scope>
    <source>
        <strain>Biogroup aegyptius / F3031</strain>
    </source>
</reference>
<sequence length="146" mass="16961">MSEGNIKLLKKVGLKITEPRLTILALMQNHKNEHFSAEDVYKIFLEQGCEIGLATVYRVLNQFDEAHIVIRHNFEGNKSVFELAPTEHHDHIICEDCGKVFEFTDNIIEQRQREISEKYGIKLKTHNVYLYGKCSDINHCDENNSK</sequence>
<organism>
    <name type="scientific">Haemophilus influenzae (strain ATCC 51907 / DSM 11121 / KW20 / Rd)</name>
    <dbReference type="NCBI Taxonomy" id="71421"/>
    <lineage>
        <taxon>Bacteria</taxon>
        <taxon>Pseudomonadati</taxon>
        <taxon>Pseudomonadota</taxon>
        <taxon>Gammaproteobacteria</taxon>
        <taxon>Pasteurellales</taxon>
        <taxon>Pasteurellaceae</taxon>
        <taxon>Haemophilus</taxon>
    </lineage>
</organism>
<comment type="function">
    <text evidence="1">Acts as a global negative controlling element, employing Fe(2+) as a cofactor to bind the operator of the repressed genes.</text>
</comment>
<comment type="subunit">
    <text evidence="1">Homodimer.</text>
</comment>
<comment type="subcellular location">
    <subcellularLocation>
        <location evidence="1">Cytoplasm</location>
    </subcellularLocation>
</comment>
<comment type="similarity">
    <text evidence="2">Belongs to the Fur family.</text>
</comment>
<protein>
    <recommendedName>
        <fullName>Ferric uptake regulation protein</fullName>
        <shortName>Ferric uptake regulator</shortName>
    </recommendedName>
</protein>
<dbReference type="EMBL" id="L42023">
    <property type="protein sequence ID" value="AAC21859.1"/>
    <property type="molecule type" value="Genomic_DNA"/>
</dbReference>
<dbReference type="EMBL" id="AF020350">
    <property type="protein sequence ID" value="AAB71196.1"/>
    <property type="molecule type" value="Genomic_DNA"/>
</dbReference>
<dbReference type="PIR" id="B64053">
    <property type="entry name" value="B64053"/>
</dbReference>
<dbReference type="RefSeq" id="NP_438359.1">
    <property type="nucleotide sequence ID" value="NC_000907.1"/>
</dbReference>
<dbReference type="SMR" id="P44561"/>
<dbReference type="STRING" id="71421.HI_0190"/>
<dbReference type="EnsemblBacteria" id="AAC21859">
    <property type="protein sequence ID" value="AAC21859"/>
    <property type="gene ID" value="HI_0190"/>
</dbReference>
<dbReference type="KEGG" id="hin:HI_0190"/>
<dbReference type="PATRIC" id="fig|71421.8.peg.195"/>
<dbReference type="eggNOG" id="COG0735">
    <property type="taxonomic scope" value="Bacteria"/>
</dbReference>
<dbReference type="HOGENOM" id="CLU_096072_3_3_6"/>
<dbReference type="OrthoDB" id="8659436at2"/>
<dbReference type="PhylomeDB" id="P44561"/>
<dbReference type="BioCyc" id="HINF71421:G1GJ1-201-MONOMER"/>
<dbReference type="Proteomes" id="UP000000579">
    <property type="component" value="Chromosome"/>
</dbReference>
<dbReference type="GO" id="GO:0005829">
    <property type="term" value="C:cytosol"/>
    <property type="evidence" value="ECO:0000318"/>
    <property type="project" value="GO_Central"/>
</dbReference>
<dbReference type="GO" id="GO:0003700">
    <property type="term" value="F:DNA-binding transcription factor activity"/>
    <property type="evidence" value="ECO:0000318"/>
    <property type="project" value="GO_Central"/>
</dbReference>
<dbReference type="GO" id="GO:0000976">
    <property type="term" value="F:transcription cis-regulatory region binding"/>
    <property type="evidence" value="ECO:0000318"/>
    <property type="project" value="GO_Central"/>
</dbReference>
<dbReference type="GO" id="GO:0008270">
    <property type="term" value="F:zinc ion binding"/>
    <property type="evidence" value="ECO:0000318"/>
    <property type="project" value="GO_Central"/>
</dbReference>
<dbReference type="GO" id="GO:0045892">
    <property type="term" value="P:negative regulation of DNA-templated transcription"/>
    <property type="evidence" value="ECO:0000318"/>
    <property type="project" value="GO_Central"/>
</dbReference>
<dbReference type="GO" id="GO:1900705">
    <property type="term" value="P:negative regulation of siderophore biosynthetic process"/>
    <property type="evidence" value="ECO:0000318"/>
    <property type="project" value="GO_Central"/>
</dbReference>
<dbReference type="CDD" id="cd07153">
    <property type="entry name" value="Fur_like"/>
    <property type="match status" value="1"/>
</dbReference>
<dbReference type="FunFam" id="1.10.10.10:FF:000007">
    <property type="entry name" value="Ferric uptake regulation protein"/>
    <property type="match status" value="1"/>
</dbReference>
<dbReference type="FunFam" id="3.30.1490.190:FF:000001">
    <property type="entry name" value="Ferric uptake regulation protein"/>
    <property type="match status" value="1"/>
</dbReference>
<dbReference type="Gene3D" id="3.30.1490.190">
    <property type="match status" value="1"/>
</dbReference>
<dbReference type="Gene3D" id="1.10.10.10">
    <property type="entry name" value="Winged helix-like DNA-binding domain superfamily/Winged helix DNA-binding domain"/>
    <property type="match status" value="1"/>
</dbReference>
<dbReference type="InterPro" id="IPR002481">
    <property type="entry name" value="FUR"/>
</dbReference>
<dbReference type="InterPro" id="IPR043135">
    <property type="entry name" value="Fur_C"/>
</dbReference>
<dbReference type="InterPro" id="IPR036388">
    <property type="entry name" value="WH-like_DNA-bd_sf"/>
</dbReference>
<dbReference type="InterPro" id="IPR036390">
    <property type="entry name" value="WH_DNA-bd_sf"/>
</dbReference>
<dbReference type="NCBIfam" id="NF006999">
    <property type="entry name" value="PRK09462.1"/>
    <property type="match status" value="1"/>
</dbReference>
<dbReference type="PANTHER" id="PTHR33202:SF2">
    <property type="entry name" value="FERRIC UPTAKE REGULATION PROTEIN"/>
    <property type="match status" value="1"/>
</dbReference>
<dbReference type="PANTHER" id="PTHR33202">
    <property type="entry name" value="ZINC UPTAKE REGULATION PROTEIN"/>
    <property type="match status" value="1"/>
</dbReference>
<dbReference type="Pfam" id="PF01475">
    <property type="entry name" value="FUR"/>
    <property type="match status" value="1"/>
</dbReference>
<dbReference type="SUPFAM" id="SSF46785">
    <property type="entry name" value="Winged helix' DNA-binding domain"/>
    <property type="match status" value="1"/>
</dbReference>
<name>FUR_HAEIN</name>
<proteinExistence type="inferred from homology"/>
<keyword id="KW-0963">Cytoplasm</keyword>
<keyword id="KW-0238">DNA-binding</keyword>
<keyword id="KW-0408">Iron</keyword>
<keyword id="KW-0479">Metal-binding</keyword>
<keyword id="KW-1185">Reference proteome</keyword>
<keyword id="KW-0678">Repressor</keyword>
<keyword id="KW-0804">Transcription</keyword>
<keyword id="KW-0805">Transcription regulation</keyword>
<keyword id="KW-0862">Zinc</keyword>
<feature type="chain" id="PRO_0000095554" description="Ferric uptake regulation protein">
    <location>
        <begin position="1"/>
        <end position="146"/>
    </location>
</feature>
<feature type="region of interest" description="DNA-binding" evidence="1">
    <location>
        <begin position="1"/>
        <end position="85"/>
    </location>
</feature>
<feature type="region of interest" description="Dimerization" evidence="1">
    <location>
        <begin position="86"/>
        <end position="146"/>
    </location>
</feature>
<feature type="binding site" evidence="1">
    <location>
        <position position="34"/>
    </location>
    <ligand>
        <name>Zn(2+)</name>
        <dbReference type="ChEBI" id="CHEBI:29105"/>
    </ligand>
</feature>
<feature type="binding site" evidence="1">
    <location>
        <position position="82"/>
    </location>
    <ligand>
        <name>Zn(2+)</name>
        <dbReference type="ChEBI" id="CHEBI:29105"/>
    </ligand>
</feature>
<feature type="binding site" evidence="1">
    <location>
        <position position="88"/>
    </location>
    <ligand>
        <name>Fe cation</name>
        <dbReference type="ChEBI" id="CHEBI:24875"/>
    </ligand>
</feature>
<feature type="binding site" evidence="1">
    <location>
        <position position="90"/>
    </location>
    <ligand>
        <name>Fe cation</name>
        <dbReference type="ChEBI" id="CHEBI:24875"/>
    </ligand>
</feature>
<feature type="binding site" evidence="1">
    <location>
        <position position="91"/>
    </location>
    <ligand>
        <name>Zn(2+)</name>
        <dbReference type="ChEBI" id="CHEBI:29105"/>
    </ligand>
</feature>
<feature type="binding site" evidence="1">
    <location>
        <position position="94"/>
    </location>
    <ligand>
        <name>Zn(2+)</name>
        <dbReference type="ChEBI" id="CHEBI:29105"/>
    </ligand>
</feature>
<feature type="binding site" evidence="1">
    <location>
        <position position="97"/>
    </location>
    <ligand>
        <name>Zn(2+)</name>
        <dbReference type="ChEBI" id="CHEBI:29105"/>
    </ligand>
</feature>
<feature type="binding site" evidence="1">
    <location>
        <position position="102"/>
    </location>
    <ligand>
        <name>Zn(2+)</name>
        <dbReference type="ChEBI" id="CHEBI:29105"/>
    </ligand>
</feature>
<feature type="binding site" evidence="1">
    <location>
        <position position="109"/>
    </location>
    <ligand>
        <name>Fe cation</name>
        <dbReference type="ChEBI" id="CHEBI:24875"/>
    </ligand>
</feature>
<feature type="binding site" evidence="1">
    <location>
        <position position="126"/>
    </location>
    <ligand>
        <name>Fe cation</name>
        <dbReference type="ChEBI" id="CHEBI:24875"/>
    </ligand>
</feature>
<feature type="sequence variant" description="In strain: F3031.">
    <original>G</original>
    <variation>E</variation>
    <location>
        <position position="4"/>
    </location>
</feature>
<feature type="sequence variant" description="In strain: F3031.">
    <original>F</original>
    <variation>L</variation>
    <location>
        <position position="44"/>
    </location>
</feature>
<feature type="sequence variant" description="In strain: F3031.">
    <original>C</original>
    <variation>S</variation>
    <location>
        <position position="49"/>
    </location>
</feature>